<keyword id="KW-0496">Mitochondrion</keyword>
<keyword id="KW-1185">Reference proteome</keyword>
<keyword id="KW-0687">Ribonucleoprotein</keyword>
<keyword id="KW-0689">Ribosomal protein</keyword>
<keyword id="KW-0809">Transit peptide</keyword>
<sequence length="197" mass="22698">MLFTIKPSFLKPVGFIQTRNLNRLYPKQRIPKRPKIPMGSKIAEVTETTSAYYNPPASSPDVRITPPVFRYDAPPIHQRDTSLSKESMFLPPAVSRKSKSKGKLRFSTHQLSSEDIKSIQDLRTKDPNAWTTGTLSKKFNTTRLLISRVCEAPKERIQKVEENFEAEKLAWGSKKREIRRQRASRQAFRTLERVAQV</sequence>
<name>RM20_SCHPO</name>
<gene>
    <name type="primary">mrpl20</name>
    <name type="ORF">SPCC1393.11</name>
</gene>
<feature type="transit peptide" description="Mitochondrion">
    <location>
        <begin position="1"/>
        <end position="20"/>
    </location>
</feature>
<feature type="chain" id="PRO_0000374038" description="Large ribosomal subunit protein mL58">
    <location>
        <begin position="21"/>
        <end position="197"/>
    </location>
</feature>
<organism>
    <name type="scientific">Schizosaccharomyces pombe (strain 972 / ATCC 24843)</name>
    <name type="common">Fission yeast</name>
    <dbReference type="NCBI Taxonomy" id="284812"/>
    <lineage>
        <taxon>Eukaryota</taxon>
        <taxon>Fungi</taxon>
        <taxon>Dikarya</taxon>
        <taxon>Ascomycota</taxon>
        <taxon>Taphrinomycotina</taxon>
        <taxon>Schizosaccharomycetes</taxon>
        <taxon>Schizosaccharomycetales</taxon>
        <taxon>Schizosaccharomycetaceae</taxon>
        <taxon>Schizosaccharomyces</taxon>
    </lineage>
</organism>
<proteinExistence type="inferred from homology"/>
<dbReference type="EMBL" id="CU329672">
    <property type="protein sequence ID" value="CAB38166.1"/>
    <property type="molecule type" value="Genomic_DNA"/>
</dbReference>
<dbReference type="PIR" id="T40959">
    <property type="entry name" value="T40959"/>
</dbReference>
<dbReference type="RefSeq" id="NP_587969.1">
    <property type="nucleotide sequence ID" value="NM_001022960.2"/>
</dbReference>
<dbReference type="SMR" id="O94723"/>
<dbReference type="ComplexPortal" id="CPX-10323">
    <property type="entry name" value="54S mitochondrial large ribosomal subunit"/>
</dbReference>
<dbReference type="FunCoup" id="O94723">
    <property type="interactions" value="72"/>
</dbReference>
<dbReference type="STRING" id="284812.O94723"/>
<dbReference type="iPTMnet" id="O94723"/>
<dbReference type="PaxDb" id="4896-SPCC1393.11.1"/>
<dbReference type="EnsemblFungi" id="SPCC1393.11.1">
    <property type="protein sequence ID" value="SPCC1393.11.1:pep"/>
    <property type="gene ID" value="SPCC1393.11"/>
</dbReference>
<dbReference type="GeneID" id="2538991"/>
<dbReference type="KEGG" id="spo:2538991"/>
<dbReference type="PomBase" id="SPCC1393.11">
    <property type="gene designation" value="mrpl20"/>
</dbReference>
<dbReference type="VEuPathDB" id="FungiDB:SPCC1393.11"/>
<dbReference type="eggNOG" id="ENOG502S0A4">
    <property type="taxonomic scope" value="Eukaryota"/>
</dbReference>
<dbReference type="HOGENOM" id="CLU_1384882_0_0_1"/>
<dbReference type="InParanoid" id="O94723"/>
<dbReference type="OMA" id="CSQFFVG"/>
<dbReference type="PhylomeDB" id="O94723"/>
<dbReference type="PRO" id="PR:O94723"/>
<dbReference type="Proteomes" id="UP000002485">
    <property type="component" value="Chromosome III"/>
</dbReference>
<dbReference type="GO" id="GO:0005762">
    <property type="term" value="C:mitochondrial large ribosomal subunit"/>
    <property type="evidence" value="ECO:0000318"/>
    <property type="project" value="GO_Central"/>
</dbReference>
<dbReference type="GO" id="GO:0005739">
    <property type="term" value="C:mitochondrion"/>
    <property type="evidence" value="ECO:0007005"/>
    <property type="project" value="PomBase"/>
</dbReference>
<dbReference type="GO" id="GO:0003735">
    <property type="term" value="F:structural constituent of ribosome"/>
    <property type="evidence" value="ECO:0000318"/>
    <property type="project" value="GO_Central"/>
</dbReference>
<dbReference type="GO" id="GO:0032543">
    <property type="term" value="P:mitochondrial translation"/>
    <property type="evidence" value="ECO:0000266"/>
    <property type="project" value="PomBase"/>
</dbReference>
<dbReference type="InterPro" id="IPR024388">
    <property type="entry name" value="Ribosomal_mL58"/>
</dbReference>
<dbReference type="PANTHER" id="PTHR28266">
    <property type="entry name" value="54S RIBOSOMAL PROTEIN L20, MITOCHONDRIAL"/>
    <property type="match status" value="1"/>
</dbReference>
<dbReference type="PANTHER" id="PTHR28266:SF1">
    <property type="entry name" value="LARGE RIBOSOMAL SUBUNIT PROTEIN ML58"/>
    <property type="match status" value="1"/>
</dbReference>
<dbReference type="Pfam" id="PF12824">
    <property type="entry name" value="MRP-L20"/>
    <property type="match status" value="1"/>
</dbReference>
<evidence type="ECO:0000250" key="1">
    <source>
        <dbReference type="UniProtKB" id="P22354"/>
    </source>
</evidence>
<evidence type="ECO:0000269" key="2">
    <source>
    </source>
</evidence>
<evidence type="ECO:0000305" key="3"/>
<reference key="1">
    <citation type="journal article" date="2002" name="Nature">
        <title>The genome sequence of Schizosaccharomyces pombe.</title>
        <authorList>
            <person name="Wood V."/>
            <person name="Gwilliam R."/>
            <person name="Rajandream M.A."/>
            <person name="Lyne M.H."/>
            <person name="Lyne R."/>
            <person name="Stewart A."/>
            <person name="Sgouros J.G."/>
            <person name="Peat N."/>
            <person name="Hayles J."/>
            <person name="Baker S.G."/>
            <person name="Basham D."/>
            <person name="Bowman S."/>
            <person name="Brooks K."/>
            <person name="Brown D."/>
            <person name="Brown S."/>
            <person name="Chillingworth T."/>
            <person name="Churcher C.M."/>
            <person name="Collins M."/>
            <person name="Connor R."/>
            <person name="Cronin A."/>
            <person name="Davis P."/>
            <person name="Feltwell T."/>
            <person name="Fraser A."/>
            <person name="Gentles S."/>
            <person name="Goble A."/>
            <person name="Hamlin N."/>
            <person name="Harris D.E."/>
            <person name="Hidalgo J."/>
            <person name="Hodgson G."/>
            <person name="Holroyd S."/>
            <person name="Hornsby T."/>
            <person name="Howarth S."/>
            <person name="Huckle E.J."/>
            <person name="Hunt S."/>
            <person name="Jagels K."/>
            <person name="James K.D."/>
            <person name="Jones L."/>
            <person name="Jones M."/>
            <person name="Leather S."/>
            <person name="McDonald S."/>
            <person name="McLean J."/>
            <person name="Mooney P."/>
            <person name="Moule S."/>
            <person name="Mungall K.L."/>
            <person name="Murphy L.D."/>
            <person name="Niblett D."/>
            <person name="Odell C."/>
            <person name="Oliver K."/>
            <person name="O'Neil S."/>
            <person name="Pearson D."/>
            <person name="Quail M.A."/>
            <person name="Rabbinowitsch E."/>
            <person name="Rutherford K.M."/>
            <person name="Rutter S."/>
            <person name="Saunders D."/>
            <person name="Seeger K."/>
            <person name="Sharp S."/>
            <person name="Skelton J."/>
            <person name="Simmonds M.N."/>
            <person name="Squares R."/>
            <person name="Squares S."/>
            <person name="Stevens K."/>
            <person name="Taylor K."/>
            <person name="Taylor R.G."/>
            <person name="Tivey A."/>
            <person name="Walsh S.V."/>
            <person name="Warren T."/>
            <person name="Whitehead S."/>
            <person name="Woodward J.R."/>
            <person name="Volckaert G."/>
            <person name="Aert R."/>
            <person name="Robben J."/>
            <person name="Grymonprez B."/>
            <person name="Weltjens I."/>
            <person name="Vanstreels E."/>
            <person name="Rieger M."/>
            <person name="Schaefer M."/>
            <person name="Mueller-Auer S."/>
            <person name="Gabel C."/>
            <person name="Fuchs M."/>
            <person name="Duesterhoeft A."/>
            <person name="Fritzc C."/>
            <person name="Holzer E."/>
            <person name="Moestl D."/>
            <person name="Hilbert H."/>
            <person name="Borzym K."/>
            <person name="Langer I."/>
            <person name="Beck A."/>
            <person name="Lehrach H."/>
            <person name="Reinhardt R."/>
            <person name="Pohl T.M."/>
            <person name="Eger P."/>
            <person name="Zimmermann W."/>
            <person name="Wedler H."/>
            <person name="Wambutt R."/>
            <person name="Purnelle B."/>
            <person name="Goffeau A."/>
            <person name="Cadieu E."/>
            <person name="Dreano S."/>
            <person name="Gloux S."/>
            <person name="Lelaure V."/>
            <person name="Mottier S."/>
            <person name="Galibert F."/>
            <person name="Aves S.J."/>
            <person name="Xiang Z."/>
            <person name="Hunt C."/>
            <person name="Moore K."/>
            <person name="Hurst S.M."/>
            <person name="Lucas M."/>
            <person name="Rochet M."/>
            <person name="Gaillardin C."/>
            <person name="Tallada V.A."/>
            <person name="Garzon A."/>
            <person name="Thode G."/>
            <person name="Daga R.R."/>
            <person name="Cruzado L."/>
            <person name="Jimenez J."/>
            <person name="Sanchez M."/>
            <person name="del Rey F."/>
            <person name="Benito J."/>
            <person name="Dominguez A."/>
            <person name="Revuelta J.L."/>
            <person name="Moreno S."/>
            <person name="Armstrong J."/>
            <person name="Forsburg S.L."/>
            <person name="Cerutti L."/>
            <person name="Lowe T."/>
            <person name="McCombie W.R."/>
            <person name="Paulsen I."/>
            <person name="Potashkin J."/>
            <person name="Shpakovski G.V."/>
            <person name="Ussery D."/>
            <person name="Barrell B.G."/>
            <person name="Nurse P."/>
        </authorList>
    </citation>
    <scope>NUCLEOTIDE SEQUENCE [LARGE SCALE GENOMIC DNA]</scope>
    <source>
        <strain>972 / ATCC 24843</strain>
    </source>
</reference>
<reference key="2">
    <citation type="journal article" date="2006" name="Nat. Biotechnol.">
        <title>ORFeome cloning and global analysis of protein localization in the fission yeast Schizosaccharomyces pombe.</title>
        <authorList>
            <person name="Matsuyama A."/>
            <person name="Arai R."/>
            <person name="Yashiroda Y."/>
            <person name="Shirai A."/>
            <person name="Kamata A."/>
            <person name="Sekido S."/>
            <person name="Kobayashi Y."/>
            <person name="Hashimoto A."/>
            <person name="Hamamoto M."/>
            <person name="Hiraoka Y."/>
            <person name="Horinouchi S."/>
            <person name="Yoshida M."/>
        </authorList>
    </citation>
    <scope>SUBCELLULAR LOCATION [LARGE SCALE ANALYSIS]</scope>
</reference>
<protein>
    <recommendedName>
        <fullName evidence="3">Large ribosomal subunit protein mL58</fullName>
    </recommendedName>
    <alternativeName>
        <fullName>54S ribosomal protein L20, mitochondrial</fullName>
    </alternativeName>
</protein>
<accession>O94723</accession>
<comment type="function">
    <text evidence="1">Component of the mitochondrial ribosome (mitoribosome), a dedicated translation machinery responsible for the synthesis of mitochondrial genome-encoded proteins, including at least some of the essential transmembrane subunits of the mitochondrial respiratory chain. The mitoribosomes are attached to the mitochondrial inner membrane and translation products are cotranslationally integrated into the membrane.</text>
</comment>
<comment type="subunit">
    <text evidence="1">Component of the mitochondrial large ribosomal subunit (mt-LSU). Mature yeast 74S mitochondrial ribosomes consist of a small (37S) and a large (54S) subunit. The 37S small subunit contains a 15S ribosomal RNA (15S mt-rRNA) and at least 32 different proteins. The 54S large subunit contains a 21S rRNA (21S mt-rRNA) and at least 45 different proteins.</text>
</comment>
<comment type="subcellular location">
    <subcellularLocation>
        <location evidence="2">Mitochondrion</location>
    </subcellularLocation>
</comment>
<comment type="similarity">
    <text evidence="3">Belongs to the mitochondrion-specific ribosomal protein mL58 family.</text>
</comment>